<feature type="chain" id="PRO_1000059634" description="Chaperone protein DnaK">
    <location>
        <begin position="1"/>
        <end position="637"/>
    </location>
</feature>
<feature type="region of interest" description="Disordered" evidence="2">
    <location>
        <begin position="605"/>
        <end position="624"/>
    </location>
</feature>
<feature type="compositionally biased region" description="Low complexity" evidence="2">
    <location>
        <begin position="605"/>
        <end position="615"/>
    </location>
</feature>
<feature type="modified residue" description="Phosphothreonine; by autocatalysis" evidence="1">
    <location>
        <position position="199"/>
    </location>
</feature>
<evidence type="ECO:0000255" key="1">
    <source>
        <dbReference type="HAMAP-Rule" id="MF_00332"/>
    </source>
</evidence>
<evidence type="ECO:0000256" key="2">
    <source>
        <dbReference type="SAM" id="MobiDB-lite"/>
    </source>
</evidence>
<reference key="1">
    <citation type="submission" date="2007-04" db="EMBL/GenBank/DDBJ databases">
        <title>Complete sequence of Pseudomonas mendocina ymp.</title>
        <authorList>
            <consortium name="US DOE Joint Genome Institute"/>
            <person name="Copeland A."/>
            <person name="Lucas S."/>
            <person name="Lapidus A."/>
            <person name="Barry K."/>
            <person name="Glavina del Rio T."/>
            <person name="Dalin E."/>
            <person name="Tice H."/>
            <person name="Pitluck S."/>
            <person name="Kiss H."/>
            <person name="Brettin T."/>
            <person name="Detter J.C."/>
            <person name="Bruce D."/>
            <person name="Han C."/>
            <person name="Schmutz J."/>
            <person name="Larimer F."/>
            <person name="Land M."/>
            <person name="Hauser L."/>
            <person name="Kyrpides N."/>
            <person name="Mikhailova N."/>
            <person name="Hersman L."/>
            <person name="Dubois J."/>
            <person name="Maurice P."/>
            <person name="Richardson P."/>
        </authorList>
    </citation>
    <scope>NUCLEOTIDE SEQUENCE [LARGE SCALE GENOMIC DNA]</scope>
    <source>
        <strain>ymp</strain>
    </source>
</reference>
<accession>A4XYF6</accession>
<organism>
    <name type="scientific">Ectopseudomonas mendocina (strain ymp)</name>
    <name type="common">Pseudomonas mendocina</name>
    <dbReference type="NCBI Taxonomy" id="399739"/>
    <lineage>
        <taxon>Bacteria</taxon>
        <taxon>Pseudomonadati</taxon>
        <taxon>Pseudomonadota</taxon>
        <taxon>Gammaproteobacteria</taxon>
        <taxon>Pseudomonadales</taxon>
        <taxon>Pseudomonadaceae</taxon>
        <taxon>Ectopseudomonas</taxon>
    </lineage>
</organism>
<comment type="function">
    <text evidence="1">Acts as a chaperone.</text>
</comment>
<comment type="induction">
    <text evidence="1">By stress conditions e.g. heat shock.</text>
</comment>
<comment type="similarity">
    <text evidence="1">Belongs to the heat shock protein 70 family.</text>
</comment>
<sequence>MGKIIGIDLGTTNSCVSILENGNVKVLENAEGARTTPSIIAYANDGEILVGQSAKRQAVTNPHNTLYAVKRLIGRRFDEDVVQKDIQMVPYKIVKADNNDAWVEVNGQKMAPPQISAEVLKKMKKTAEDYLGEPVTEAVITVPAYFNDSQRQATKDAGRIAGLDVKRIINEPTAAALAYGMDKAKGDHTVIVYDLGGGTFDVSVIEIAEVDGEHQFEVLATNGDTFLGGEDFDIRLIDYLVDEFKKETGMNLKGDPLAMQRLKEAAEKAKIELSSSQQTDVNLPYITADATGPKHLNVKISRSKLESLVEDLVQRTIEPCRTALKDAGIDVSKIDDVILVGGQTRMPLVQKTVAEFFGKEPRKDVNPDEAVAMGAAIQGAVLAGDVKDVLLLDVSPLTLGIETMGGVMTALIEKNTTIPTKKSQVFSTADDNQSAVTIHVLQGERKQAAQNKSLGKFDLAEIPPAPRGVPQIEVTFDIDANGILHVSAKDKATGKQQSIVIKANSGLSEEEIQQMVRDAEANAEEDRKFEELATARNQGDQLVHATRKMLTEAGDKATADEKEAIEKAIGELEVAVKGDDKAAIEAKMNALSEATTPLAQKMYAEQPQGAAQPGAEESKDAADDVVDAEFEEVKENK</sequence>
<proteinExistence type="inferred from homology"/>
<dbReference type="EMBL" id="CP000680">
    <property type="protein sequence ID" value="ABP86372.1"/>
    <property type="molecule type" value="Genomic_DNA"/>
</dbReference>
<dbReference type="SMR" id="A4XYF6"/>
<dbReference type="STRING" id="399739.Pmen_3624"/>
<dbReference type="KEGG" id="pmy:Pmen_3624"/>
<dbReference type="PATRIC" id="fig|399739.8.peg.3673"/>
<dbReference type="eggNOG" id="COG0443">
    <property type="taxonomic scope" value="Bacteria"/>
</dbReference>
<dbReference type="HOGENOM" id="CLU_005965_2_1_6"/>
<dbReference type="OrthoDB" id="9766019at2"/>
<dbReference type="GO" id="GO:0005524">
    <property type="term" value="F:ATP binding"/>
    <property type="evidence" value="ECO:0007669"/>
    <property type="project" value="UniProtKB-UniRule"/>
</dbReference>
<dbReference type="GO" id="GO:0140662">
    <property type="term" value="F:ATP-dependent protein folding chaperone"/>
    <property type="evidence" value="ECO:0007669"/>
    <property type="project" value="InterPro"/>
</dbReference>
<dbReference type="GO" id="GO:0051082">
    <property type="term" value="F:unfolded protein binding"/>
    <property type="evidence" value="ECO:0007669"/>
    <property type="project" value="InterPro"/>
</dbReference>
<dbReference type="CDD" id="cd10234">
    <property type="entry name" value="ASKHA_NBD_HSP70_DnaK-like"/>
    <property type="match status" value="1"/>
</dbReference>
<dbReference type="FunFam" id="2.60.34.10:FF:000014">
    <property type="entry name" value="Chaperone protein DnaK HSP70"/>
    <property type="match status" value="1"/>
</dbReference>
<dbReference type="FunFam" id="1.20.1270.10:FF:000001">
    <property type="entry name" value="Molecular chaperone DnaK"/>
    <property type="match status" value="1"/>
</dbReference>
<dbReference type="FunFam" id="3.30.420.40:FF:000004">
    <property type="entry name" value="Molecular chaperone DnaK"/>
    <property type="match status" value="1"/>
</dbReference>
<dbReference type="FunFam" id="3.90.640.10:FF:000003">
    <property type="entry name" value="Molecular chaperone DnaK"/>
    <property type="match status" value="1"/>
</dbReference>
<dbReference type="Gene3D" id="1.20.1270.10">
    <property type="match status" value="1"/>
</dbReference>
<dbReference type="Gene3D" id="3.30.420.40">
    <property type="match status" value="2"/>
</dbReference>
<dbReference type="Gene3D" id="3.90.640.10">
    <property type="entry name" value="Actin, Chain A, domain 4"/>
    <property type="match status" value="1"/>
</dbReference>
<dbReference type="Gene3D" id="2.60.34.10">
    <property type="entry name" value="Substrate Binding Domain Of DNAk, Chain A, domain 1"/>
    <property type="match status" value="1"/>
</dbReference>
<dbReference type="HAMAP" id="MF_00332">
    <property type="entry name" value="DnaK"/>
    <property type="match status" value="1"/>
</dbReference>
<dbReference type="InterPro" id="IPR043129">
    <property type="entry name" value="ATPase_NBD"/>
</dbReference>
<dbReference type="InterPro" id="IPR012725">
    <property type="entry name" value="Chaperone_DnaK"/>
</dbReference>
<dbReference type="InterPro" id="IPR018181">
    <property type="entry name" value="Heat_shock_70_CS"/>
</dbReference>
<dbReference type="InterPro" id="IPR029048">
    <property type="entry name" value="HSP70_C_sf"/>
</dbReference>
<dbReference type="InterPro" id="IPR029047">
    <property type="entry name" value="HSP70_peptide-bd_sf"/>
</dbReference>
<dbReference type="InterPro" id="IPR013126">
    <property type="entry name" value="Hsp_70_fam"/>
</dbReference>
<dbReference type="NCBIfam" id="NF001413">
    <property type="entry name" value="PRK00290.1"/>
    <property type="match status" value="1"/>
</dbReference>
<dbReference type="NCBIfam" id="NF003520">
    <property type="entry name" value="PRK05183.1"/>
    <property type="match status" value="1"/>
</dbReference>
<dbReference type="NCBIfam" id="TIGR02350">
    <property type="entry name" value="prok_dnaK"/>
    <property type="match status" value="1"/>
</dbReference>
<dbReference type="PANTHER" id="PTHR19375">
    <property type="entry name" value="HEAT SHOCK PROTEIN 70KDA"/>
    <property type="match status" value="1"/>
</dbReference>
<dbReference type="Pfam" id="PF00012">
    <property type="entry name" value="HSP70"/>
    <property type="match status" value="1"/>
</dbReference>
<dbReference type="PRINTS" id="PR00301">
    <property type="entry name" value="HEATSHOCK70"/>
</dbReference>
<dbReference type="SUPFAM" id="SSF53067">
    <property type="entry name" value="Actin-like ATPase domain"/>
    <property type="match status" value="2"/>
</dbReference>
<dbReference type="SUPFAM" id="SSF100934">
    <property type="entry name" value="Heat shock protein 70kD (HSP70), C-terminal subdomain"/>
    <property type="match status" value="1"/>
</dbReference>
<dbReference type="SUPFAM" id="SSF100920">
    <property type="entry name" value="Heat shock protein 70kD (HSP70), peptide-binding domain"/>
    <property type="match status" value="1"/>
</dbReference>
<dbReference type="PROSITE" id="PS00297">
    <property type="entry name" value="HSP70_1"/>
    <property type="match status" value="1"/>
</dbReference>
<dbReference type="PROSITE" id="PS00329">
    <property type="entry name" value="HSP70_2"/>
    <property type="match status" value="1"/>
</dbReference>
<dbReference type="PROSITE" id="PS01036">
    <property type="entry name" value="HSP70_3"/>
    <property type="match status" value="1"/>
</dbReference>
<keyword id="KW-0067">ATP-binding</keyword>
<keyword id="KW-0143">Chaperone</keyword>
<keyword id="KW-0547">Nucleotide-binding</keyword>
<keyword id="KW-0597">Phosphoprotein</keyword>
<keyword id="KW-0346">Stress response</keyword>
<name>DNAK_ECTM1</name>
<gene>
    <name evidence="1" type="primary">dnaK</name>
    <name type="ordered locus">Pmen_3624</name>
</gene>
<protein>
    <recommendedName>
        <fullName evidence="1">Chaperone protein DnaK</fullName>
    </recommendedName>
    <alternativeName>
        <fullName evidence="1">HSP70</fullName>
    </alternativeName>
    <alternativeName>
        <fullName evidence="1">Heat shock 70 kDa protein</fullName>
    </alternativeName>
    <alternativeName>
        <fullName evidence="1">Heat shock protein 70</fullName>
    </alternativeName>
</protein>